<accession>O51632</accession>
<gene>
    <name type="ordered locus">BB_0689</name>
</gene>
<dbReference type="EMBL" id="AE000783">
    <property type="protein sequence ID" value="AAC67038.1"/>
    <property type="molecule type" value="Genomic_DNA"/>
</dbReference>
<dbReference type="PIR" id="H70185">
    <property type="entry name" value="H70185"/>
</dbReference>
<dbReference type="RefSeq" id="NP_212823.1">
    <property type="nucleotide sequence ID" value="NC_001318.1"/>
</dbReference>
<dbReference type="RefSeq" id="WP_002662208.1">
    <property type="nucleotide sequence ID" value="NC_001318.1"/>
</dbReference>
<dbReference type="PDB" id="4D53">
    <property type="method" value="X-ray"/>
    <property type="resolution" value="1.85 A"/>
    <property type="chains" value="A/B=22-155"/>
</dbReference>
<dbReference type="PDBsum" id="4D53"/>
<dbReference type="SMR" id="O51632"/>
<dbReference type="STRING" id="224326.BB_0689"/>
<dbReference type="PaxDb" id="224326-BB_0689"/>
<dbReference type="EnsemblBacteria" id="AAC67038">
    <property type="protein sequence ID" value="AAC67038"/>
    <property type="gene ID" value="BB_0689"/>
</dbReference>
<dbReference type="KEGG" id="bbu:BB_0689"/>
<dbReference type="PATRIC" id="fig|224326.49.peg.1080"/>
<dbReference type="HOGENOM" id="CLU_1737021_0_0_12"/>
<dbReference type="OrthoDB" id="9783944at2"/>
<dbReference type="EvolutionaryTrace" id="O51632"/>
<dbReference type="Proteomes" id="UP000001807">
    <property type="component" value="Chromosome"/>
</dbReference>
<dbReference type="CDD" id="cd05379">
    <property type="entry name" value="CAP_bacterial"/>
    <property type="match status" value="1"/>
</dbReference>
<dbReference type="Gene3D" id="3.40.33.10">
    <property type="entry name" value="CAP"/>
    <property type="match status" value="1"/>
</dbReference>
<dbReference type="InterPro" id="IPR014044">
    <property type="entry name" value="CAP_dom"/>
</dbReference>
<dbReference type="InterPro" id="IPR035940">
    <property type="entry name" value="CAP_sf"/>
</dbReference>
<dbReference type="PANTHER" id="PTHR31157">
    <property type="entry name" value="SCP DOMAIN-CONTAINING PROTEIN"/>
    <property type="match status" value="1"/>
</dbReference>
<dbReference type="PANTHER" id="PTHR31157:SF1">
    <property type="entry name" value="SCP DOMAIN-CONTAINING PROTEIN"/>
    <property type="match status" value="1"/>
</dbReference>
<dbReference type="Pfam" id="PF00188">
    <property type="entry name" value="CAP"/>
    <property type="match status" value="1"/>
</dbReference>
<dbReference type="SUPFAM" id="SSF55797">
    <property type="entry name" value="PR-1-like"/>
    <property type="match status" value="1"/>
</dbReference>
<dbReference type="PROSITE" id="PS51257">
    <property type="entry name" value="PROKAR_LIPOPROTEIN"/>
    <property type="match status" value="1"/>
</dbReference>
<reference key="1">
    <citation type="journal article" date="1997" name="Nature">
        <title>Genomic sequence of a Lyme disease spirochaete, Borrelia burgdorferi.</title>
        <authorList>
            <person name="Fraser C.M."/>
            <person name="Casjens S."/>
            <person name="Huang W.M."/>
            <person name="Sutton G.G."/>
            <person name="Clayton R.A."/>
            <person name="Lathigra R."/>
            <person name="White O."/>
            <person name="Ketchum K.A."/>
            <person name="Dodson R.J."/>
            <person name="Hickey E.K."/>
            <person name="Gwinn M.L."/>
            <person name="Dougherty B.A."/>
            <person name="Tomb J.-F."/>
            <person name="Fleischmann R.D."/>
            <person name="Richardson D.L."/>
            <person name="Peterson J.D."/>
            <person name="Kerlavage A.R."/>
            <person name="Quackenbush J."/>
            <person name="Salzberg S.L."/>
            <person name="Hanson M."/>
            <person name="van Vugt R."/>
            <person name="Palmer N."/>
            <person name="Adams M.D."/>
            <person name="Gocayne J.D."/>
            <person name="Weidman J.F."/>
            <person name="Utterback T.R."/>
            <person name="Watthey L."/>
            <person name="McDonald L.A."/>
            <person name="Artiach P."/>
            <person name="Bowman C."/>
            <person name="Garland S.A."/>
            <person name="Fujii C."/>
            <person name="Cotton M.D."/>
            <person name="Horst K."/>
            <person name="Roberts K.M."/>
            <person name="Hatch B."/>
            <person name="Smith H.O."/>
            <person name="Venter J.C."/>
        </authorList>
    </citation>
    <scope>NUCLEOTIDE SEQUENCE [LARGE SCALE GENOMIC DNA]</scope>
    <source>
        <strain>ATCC 35210 / DSM 4680 / CIP 102532 / B31</strain>
    </source>
</reference>
<protein>
    <recommendedName>
        <fullName>Uncharacterized protein BB_0689</fullName>
    </recommendedName>
</protein>
<feature type="chain" id="PRO_0000174410" description="Uncharacterized protein BB_0689">
    <location>
        <begin position="1"/>
        <end position="155"/>
    </location>
</feature>
<feature type="domain" description="SCP">
    <location>
        <begin position="37"/>
        <end position="140"/>
    </location>
</feature>
<feature type="helix" evidence="1">
    <location>
        <begin position="27"/>
        <end position="43"/>
    </location>
</feature>
<feature type="helix" evidence="1">
    <location>
        <begin position="53"/>
        <end position="69"/>
    </location>
</feature>
<feature type="helix" evidence="1">
    <location>
        <begin position="76"/>
        <end position="78"/>
    </location>
</feature>
<feature type="helix" evidence="1">
    <location>
        <begin position="81"/>
        <end position="86"/>
    </location>
</feature>
<feature type="strand" evidence="1">
    <location>
        <begin position="92"/>
        <end position="102"/>
    </location>
</feature>
<feature type="turn" evidence="1">
    <location>
        <begin position="105"/>
        <end position="107"/>
    </location>
</feature>
<feature type="helix" evidence="1">
    <location>
        <begin position="108"/>
        <end position="113"/>
    </location>
</feature>
<feature type="helix" evidence="1">
    <location>
        <begin position="116"/>
        <end position="122"/>
    </location>
</feature>
<feature type="strand" evidence="1">
    <location>
        <begin position="129"/>
        <end position="137"/>
    </location>
</feature>
<feature type="strand" evidence="1">
    <location>
        <begin position="142"/>
        <end position="151"/>
    </location>
</feature>
<name>Y689_BORBU</name>
<evidence type="ECO:0007829" key="1">
    <source>
        <dbReference type="PDB" id="4D53"/>
    </source>
</evidence>
<sequence>MKKLIIIFTLFLSQACNLSTMHKIDTKEDMKILYSEIAELRKKLNLNHLEIDDTLEKVAKEYAIKLGENRTITHTLFGTTPMQRIHKYDQSFNLTREILASGIELNRVVNAWLNSPSHKEALINTDTDKIGGYRLKTTDNIDIFVVLFGKRKYKN</sequence>
<keyword id="KW-0002">3D-structure</keyword>
<keyword id="KW-1185">Reference proteome</keyword>
<organism>
    <name type="scientific">Borreliella burgdorferi (strain ATCC 35210 / DSM 4680 / CIP 102532 / B31)</name>
    <name type="common">Borrelia burgdorferi</name>
    <dbReference type="NCBI Taxonomy" id="224326"/>
    <lineage>
        <taxon>Bacteria</taxon>
        <taxon>Pseudomonadati</taxon>
        <taxon>Spirochaetota</taxon>
        <taxon>Spirochaetia</taxon>
        <taxon>Spirochaetales</taxon>
        <taxon>Borreliaceae</taxon>
        <taxon>Borreliella</taxon>
    </lineage>
</organism>
<proteinExistence type="evidence at protein level"/>